<dbReference type="EMBL" id="U00089">
    <property type="protein sequence ID" value="AAB95701.1"/>
    <property type="molecule type" value="Genomic_DNA"/>
</dbReference>
<dbReference type="PIR" id="S73379">
    <property type="entry name" value="S73379"/>
</dbReference>
<dbReference type="RefSeq" id="NP_109789.1">
    <property type="nucleotide sequence ID" value="NC_000912.1"/>
</dbReference>
<dbReference type="SMR" id="P75568"/>
<dbReference type="EnsemblBacteria" id="AAB95701">
    <property type="protein sequence ID" value="AAB95701"/>
    <property type="gene ID" value="MPN_101"/>
</dbReference>
<dbReference type="KEGG" id="mpn:MPN_101"/>
<dbReference type="PATRIC" id="fig|272634.6.peg.105"/>
<dbReference type="HOGENOM" id="CLU_053128_0_0_14"/>
<dbReference type="BioCyc" id="MPNE272634:G1GJ3-172-MONOMER"/>
<dbReference type="Proteomes" id="UP000000808">
    <property type="component" value="Chromosome"/>
</dbReference>
<dbReference type="InterPro" id="IPR022116">
    <property type="entry name" value="P1_N"/>
</dbReference>
<dbReference type="Pfam" id="PF12378">
    <property type="entry name" value="P1_N"/>
    <property type="match status" value="1"/>
</dbReference>
<gene>
    <name type="ordered locus">MPN_101</name>
    <name type="ORF">C09_orf428V</name>
    <name type="ORF">MP053</name>
</gene>
<feature type="chain" id="PRO_0000210644" description="Uncharacterized protein MPN_101">
    <location>
        <begin position="1"/>
        <end position="428"/>
    </location>
</feature>
<feature type="region of interest" description="Disordered" evidence="1">
    <location>
        <begin position="1"/>
        <end position="25"/>
    </location>
</feature>
<feature type="region of interest" description="Disordered" evidence="1">
    <location>
        <begin position="157"/>
        <end position="219"/>
    </location>
</feature>
<feature type="region of interest" description="Disordered" evidence="1">
    <location>
        <begin position="247"/>
        <end position="271"/>
    </location>
</feature>
<feature type="compositionally biased region" description="Polar residues" evidence="1">
    <location>
        <begin position="12"/>
        <end position="22"/>
    </location>
</feature>
<feature type="compositionally biased region" description="Basic and acidic residues" evidence="1">
    <location>
        <begin position="157"/>
        <end position="171"/>
    </location>
</feature>
<feature type="compositionally biased region" description="Low complexity" evidence="1">
    <location>
        <begin position="172"/>
        <end position="186"/>
    </location>
</feature>
<feature type="compositionally biased region" description="Polar residues" evidence="1">
    <location>
        <begin position="206"/>
        <end position="217"/>
    </location>
</feature>
<keyword id="KW-1185">Reference proteome</keyword>
<proteinExistence type="inferred from homology"/>
<protein>
    <recommendedName>
        <fullName>Uncharacterized protein MPN_101</fullName>
    </recommendedName>
</protein>
<name>Y101_MYCPN</name>
<reference key="1">
    <citation type="journal article" date="1996" name="Nucleic Acids Res.">
        <title>Complete sequence analysis of the genome of the bacterium Mycoplasma pneumoniae.</title>
        <authorList>
            <person name="Himmelreich R."/>
            <person name="Hilbert H."/>
            <person name="Plagens H."/>
            <person name="Pirkl E."/>
            <person name="Li B.-C."/>
            <person name="Herrmann R."/>
        </authorList>
    </citation>
    <scope>NUCLEOTIDE SEQUENCE [LARGE SCALE GENOMIC DNA]</scope>
    <source>
        <strain>ATCC 29342 / M129 / Subtype 1</strain>
    </source>
</reference>
<sequence>MRDNSAKGITAGSESQQTTYDPTRTEAALTASTTFALRRYDLAGRALYDLDFSRLNPQTPTRDQTGQITFNPFGGFGLSGAAPQQWNEVKNKVPVEVAQDPSNPYRFAVLLVPRSVVYYEQLQRGLALPNQGSSSGSGQQNTTIGAYGLKVKNAEADTAKSNEKLQGDESKSSNGSSSTSTTTQRGGSSGDTKVKALQVAVKKKSGSQGNSGEQGTEQVELESNDLANAPIKRGEESGQSVQLKAADFGTTPSSSGSGGNSNPGSPTPWRPWLATEQIHKDLPKWSASILILYDAPYARNRTAIDRVDHLDPKVMTANYPPSWRTPKWNHHGLWDWKARDVLLQTTGFFNSRRHPEWFDQGQAVADNTQTGFDTDDTDNKKTRLSKGSWLRQAGPDRPPVWSVLRQHWQPHLVRASAFGVWDLFVLIN</sequence>
<comment type="similarity">
    <text evidence="2">Belongs to the adhesin P1 family.</text>
</comment>
<evidence type="ECO:0000256" key="1">
    <source>
        <dbReference type="SAM" id="MobiDB-lite"/>
    </source>
</evidence>
<evidence type="ECO:0000305" key="2"/>
<accession>P75568</accession>
<organism>
    <name type="scientific">Mycoplasma pneumoniae (strain ATCC 29342 / M129 / Subtype 1)</name>
    <name type="common">Mycoplasmoides pneumoniae</name>
    <dbReference type="NCBI Taxonomy" id="272634"/>
    <lineage>
        <taxon>Bacteria</taxon>
        <taxon>Bacillati</taxon>
        <taxon>Mycoplasmatota</taxon>
        <taxon>Mycoplasmoidales</taxon>
        <taxon>Mycoplasmoidaceae</taxon>
        <taxon>Mycoplasmoides</taxon>
    </lineage>
</organism>